<name>THIG_PSEFS</name>
<sequence length="264" mass="28391">MSIVRSDKPFVLAGRTYQSRLLVGTGKYRDMEETRLAIEASGAEIVTFAVRRTNLGQIEGEPNLLEVLSPDRYTFLPNTAGCYDAIEAVRTCRLARELLDGHNLVKLEVLADQKTLFPNVIETLKAAETLVKEGFDVMVYTSDDPIIARQLAEIGCIAVMPLAGLIGSGLGICNPYNLQIILEEAKIPVLVDAGVGTASDATIAMELGCDAVLMNSAIAHAQQPIMMAEAMNHAIVAGRLAYLAGRMPKKLYASASSPLDGLIK</sequence>
<feature type="chain" id="PRO_1000206140" description="Thiazole synthase">
    <location>
        <begin position="1"/>
        <end position="264"/>
    </location>
</feature>
<feature type="active site" description="Schiff-base intermediate with DXP" evidence="1">
    <location>
        <position position="106"/>
    </location>
</feature>
<feature type="binding site" evidence="1">
    <location>
        <position position="167"/>
    </location>
    <ligand>
        <name>1-deoxy-D-xylulose 5-phosphate</name>
        <dbReference type="ChEBI" id="CHEBI:57792"/>
    </ligand>
</feature>
<feature type="binding site" evidence="1">
    <location>
        <begin position="193"/>
        <end position="194"/>
    </location>
    <ligand>
        <name>1-deoxy-D-xylulose 5-phosphate</name>
        <dbReference type="ChEBI" id="CHEBI:57792"/>
    </ligand>
</feature>
<feature type="binding site" evidence="1">
    <location>
        <begin position="215"/>
        <end position="216"/>
    </location>
    <ligand>
        <name>1-deoxy-D-xylulose 5-phosphate</name>
        <dbReference type="ChEBI" id="CHEBI:57792"/>
    </ligand>
</feature>
<evidence type="ECO:0000255" key="1">
    <source>
        <dbReference type="HAMAP-Rule" id="MF_00443"/>
    </source>
</evidence>
<organism>
    <name type="scientific">Pseudomonas fluorescens (strain SBW25)</name>
    <dbReference type="NCBI Taxonomy" id="216595"/>
    <lineage>
        <taxon>Bacteria</taxon>
        <taxon>Pseudomonadati</taxon>
        <taxon>Pseudomonadota</taxon>
        <taxon>Gammaproteobacteria</taxon>
        <taxon>Pseudomonadales</taxon>
        <taxon>Pseudomonadaceae</taxon>
        <taxon>Pseudomonas</taxon>
    </lineage>
</organism>
<accession>C3K3L7</accession>
<reference key="1">
    <citation type="journal article" date="2009" name="Genome Biol.">
        <title>Genomic and genetic analyses of diversity and plant interactions of Pseudomonas fluorescens.</title>
        <authorList>
            <person name="Silby M.W."/>
            <person name="Cerdeno-Tarraga A.M."/>
            <person name="Vernikos G.S."/>
            <person name="Giddens S.R."/>
            <person name="Jackson R.W."/>
            <person name="Preston G.M."/>
            <person name="Zhang X.-X."/>
            <person name="Moon C.D."/>
            <person name="Gehrig S.M."/>
            <person name="Godfrey S.A.C."/>
            <person name="Knight C.G."/>
            <person name="Malone J.G."/>
            <person name="Robinson Z."/>
            <person name="Spiers A.J."/>
            <person name="Harris S."/>
            <person name="Challis G.L."/>
            <person name="Yaxley A.M."/>
            <person name="Harris D."/>
            <person name="Seeger K."/>
            <person name="Murphy L."/>
            <person name="Rutter S."/>
            <person name="Squares R."/>
            <person name="Quail M.A."/>
            <person name="Saunders E."/>
            <person name="Mavromatis K."/>
            <person name="Brettin T.S."/>
            <person name="Bentley S.D."/>
            <person name="Hothersall J."/>
            <person name="Stephens E."/>
            <person name="Thomas C.M."/>
            <person name="Parkhill J."/>
            <person name="Levy S.B."/>
            <person name="Rainey P.B."/>
            <person name="Thomson N.R."/>
        </authorList>
    </citation>
    <scope>NUCLEOTIDE SEQUENCE [LARGE SCALE GENOMIC DNA]</scope>
    <source>
        <strain>SBW25</strain>
    </source>
</reference>
<gene>
    <name evidence="1" type="primary">thiG</name>
    <name type="ordered locus">PFLU_5773</name>
</gene>
<comment type="function">
    <text evidence="1">Catalyzes the rearrangement of 1-deoxy-D-xylulose 5-phosphate (DXP) to produce the thiazole phosphate moiety of thiamine. Sulfur is provided by the thiocarboxylate moiety of the carrier protein ThiS. In vitro, sulfur can be provided by H(2)S.</text>
</comment>
<comment type="catalytic activity">
    <reaction evidence="1">
        <text>[ThiS sulfur-carrier protein]-C-terminal-Gly-aminoethanethioate + 2-iminoacetate + 1-deoxy-D-xylulose 5-phosphate = [ThiS sulfur-carrier protein]-C-terminal Gly-Gly + 2-[(2R,5Z)-2-carboxy-4-methylthiazol-5(2H)-ylidene]ethyl phosphate + 2 H2O + H(+)</text>
        <dbReference type="Rhea" id="RHEA:26297"/>
        <dbReference type="Rhea" id="RHEA-COMP:12909"/>
        <dbReference type="Rhea" id="RHEA-COMP:19908"/>
        <dbReference type="ChEBI" id="CHEBI:15377"/>
        <dbReference type="ChEBI" id="CHEBI:15378"/>
        <dbReference type="ChEBI" id="CHEBI:57792"/>
        <dbReference type="ChEBI" id="CHEBI:62899"/>
        <dbReference type="ChEBI" id="CHEBI:77846"/>
        <dbReference type="ChEBI" id="CHEBI:90778"/>
        <dbReference type="ChEBI" id="CHEBI:232372"/>
        <dbReference type="EC" id="2.8.1.10"/>
    </reaction>
</comment>
<comment type="pathway">
    <text evidence="1">Cofactor biosynthesis; thiamine diphosphate biosynthesis.</text>
</comment>
<comment type="subunit">
    <text evidence="1">Homotetramer. Forms heterodimers with either ThiH or ThiS.</text>
</comment>
<comment type="subcellular location">
    <subcellularLocation>
        <location evidence="1">Cytoplasm</location>
    </subcellularLocation>
</comment>
<comment type="similarity">
    <text evidence="1">Belongs to the ThiG family.</text>
</comment>
<protein>
    <recommendedName>
        <fullName evidence="1">Thiazole synthase</fullName>
        <ecNumber evidence="1">2.8.1.10</ecNumber>
    </recommendedName>
</protein>
<dbReference type="EC" id="2.8.1.10" evidence="1"/>
<dbReference type="EMBL" id="AM181176">
    <property type="protein sequence ID" value="CAY53161.1"/>
    <property type="molecule type" value="Genomic_DNA"/>
</dbReference>
<dbReference type="RefSeq" id="WP_015886353.1">
    <property type="nucleotide sequence ID" value="NC_012660.1"/>
</dbReference>
<dbReference type="SMR" id="C3K3L7"/>
<dbReference type="STRING" id="294.SRM1_05425"/>
<dbReference type="eggNOG" id="COG2022">
    <property type="taxonomic scope" value="Bacteria"/>
</dbReference>
<dbReference type="HOGENOM" id="CLU_062233_1_1_6"/>
<dbReference type="OrthoDB" id="9805935at2"/>
<dbReference type="UniPathway" id="UPA00060"/>
<dbReference type="GO" id="GO:0005737">
    <property type="term" value="C:cytoplasm"/>
    <property type="evidence" value="ECO:0007669"/>
    <property type="project" value="UniProtKB-SubCell"/>
</dbReference>
<dbReference type="GO" id="GO:1990107">
    <property type="term" value="F:thiazole synthase activity"/>
    <property type="evidence" value="ECO:0007669"/>
    <property type="project" value="UniProtKB-EC"/>
</dbReference>
<dbReference type="GO" id="GO:0009229">
    <property type="term" value="P:thiamine diphosphate biosynthetic process"/>
    <property type="evidence" value="ECO:0007669"/>
    <property type="project" value="UniProtKB-UniRule"/>
</dbReference>
<dbReference type="CDD" id="cd04728">
    <property type="entry name" value="ThiG"/>
    <property type="match status" value="1"/>
</dbReference>
<dbReference type="Gene3D" id="3.20.20.70">
    <property type="entry name" value="Aldolase class I"/>
    <property type="match status" value="1"/>
</dbReference>
<dbReference type="HAMAP" id="MF_00443">
    <property type="entry name" value="ThiG"/>
    <property type="match status" value="1"/>
</dbReference>
<dbReference type="InterPro" id="IPR013785">
    <property type="entry name" value="Aldolase_TIM"/>
</dbReference>
<dbReference type="InterPro" id="IPR033983">
    <property type="entry name" value="Thiazole_synthase_ThiG"/>
</dbReference>
<dbReference type="InterPro" id="IPR008867">
    <property type="entry name" value="ThiG"/>
</dbReference>
<dbReference type="PANTHER" id="PTHR34266">
    <property type="entry name" value="THIAZOLE SYNTHASE"/>
    <property type="match status" value="1"/>
</dbReference>
<dbReference type="PANTHER" id="PTHR34266:SF2">
    <property type="entry name" value="THIAZOLE SYNTHASE"/>
    <property type="match status" value="1"/>
</dbReference>
<dbReference type="Pfam" id="PF05690">
    <property type="entry name" value="ThiG"/>
    <property type="match status" value="1"/>
</dbReference>
<dbReference type="SUPFAM" id="SSF110399">
    <property type="entry name" value="ThiG-like"/>
    <property type="match status" value="1"/>
</dbReference>
<proteinExistence type="inferred from homology"/>
<keyword id="KW-0963">Cytoplasm</keyword>
<keyword id="KW-0704">Schiff base</keyword>
<keyword id="KW-0784">Thiamine biosynthesis</keyword>
<keyword id="KW-0808">Transferase</keyword>